<protein>
    <recommendedName>
        <fullName evidence="1">D-aminoacyl-tRNA deacylase</fullName>
        <shortName evidence="1">DTD</shortName>
        <ecNumber evidence="1">3.1.1.96</ecNumber>
    </recommendedName>
    <alternativeName>
        <fullName evidence="1">Gly-tRNA(Ala) deacylase</fullName>
    </alternativeName>
</protein>
<name>DTD_ACIBT</name>
<dbReference type="EC" id="3.1.1.96" evidence="1"/>
<dbReference type="EMBL" id="CP000521">
    <property type="protein sequence ID" value="ABO13772.2"/>
    <property type="molecule type" value="Genomic_DNA"/>
</dbReference>
<dbReference type="RefSeq" id="WP_001202017.1">
    <property type="nucleotide sequence ID" value="NZ_CP053098.1"/>
</dbReference>
<dbReference type="SMR" id="A3MA28"/>
<dbReference type="KEGG" id="acb:A1S_3383"/>
<dbReference type="HOGENOM" id="CLU_076901_1_1_6"/>
<dbReference type="GO" id="GO:0005737">
    <property type="term" value="C:cytoplasm"/>
    <property type="evidence" value="ECO:0007669"/>
    <property type="project" value="UniProtKB-SubCell"/>
</dbReference>
<dbReference type="GO" id="GO:0051500">
    <property type="term" value="F:D-tyrosyl-tRNA(Tyr) deacylase activity"/>
    <property type="evidence" value="ECO:0007669"/>
    <property type="project" value="TreeGrafter"/>
</dbReference>
<dbReference type="GO" id="GO:0106026">
    <property type="term" value="F:Gly-tRNA(Ala) deacylase activity"/>
    <property type="evidence" value="ECO:0007669"/>
    <property type="project" value="UniProtKB-UniRule"/>
</dbReference>
<dbReference type="GO" id="GO:0043908">
    <property type="term" value="F:Ser(Gly)-tRNA(Ala) hydrolase activity"/>
    <property type="evidence" value="ECO:0007669"/>
    <property type="project" value="UniProtKB-UniRule"/>
</dbReference>
<dbReference type="GO" id="GO:0000049">
    <property type="term" value="F:tRNA binding"/>
    <property type="evidence" value="ECO:0007669"/>
    <property type="project" value="UniProtKB-UniRule"/>
</dbReference>
<dbReference type="GO" id="GO:0019478">
    <property type="term" value="P:D-amino acid catabolic process"/>
    <property type="evidence" value="ECO:0007669"/>
    <property type="project" value="UniProtKB-UniRule"/>
</dbReference>
<dbReference type="CDD" id="cd00563">
    <property type="entry name" value="Dtyr_deacylase"/>
    <property type="match status" value="1"/>
</dbReference>
<dbReference type="FunFam" id="3.50.80.10:FF:000001">
    <property type="entry name" value="D-aminoacyl-tRNA deacylase"/>
    <property type="match status" value="1"/>
</dbReference>
<dbReference type="Gene3D" id="3.50.80.10">
    <property type="entry name" value="D-tyrosyl-tRNA(Tyr) deacylase"/>
    <property type="match status" value="1"/>
</dbReference>
<dbReference type="HAMAP" id="MF_00518">
    <property type="entry name" value="Deacylase_Dtd"/>
    <property type="match status" value="1"/>
</dbReference>
<dbReference type="InterPro" id="IPR003732">
    <property type="entry name" value="Daa-tRNA_deacyls_DTD"/>
</dbReference>
<dbReference type="InterPro" id="IPR023509">
    <property type="entry name" value="DTD-like_sf"/>
</dbReference>
<dbReference type="NCBIfam" id="TIGR00256">
    <property type="entry name" value="D-aminoacyl-tRNA deacylase"/>
    <property type="match status" value="1"/>
</dbReference>
<dbReference type="PANTHER" id="PTHR10472:SF5">
    <property type="entry name" value="D-AMINOACYL-TRNA DEACYLASE 1"/>
    <property type="match status" value="1"/>
</dbReference>
<dbReference type="PANTHER" id="PTHR10472">
    <property type="entry name" value="D-TYROSYL-TRNA TYR DEACYLASE"/>
    <property type="match status" value="1"/>
</dbReference>
<dbReference type="Pfam" id="PF02580">
    <property type="entry name" value="Tyr_Deacylase"/>
    <property type="match status" value="1"/>
</dbReference>
<dbReference type="SUPFAM" id="SSF69500">
    <property type="entry name" value="DTD-like"/>
    <property type="match status" value="1"/>
</dbReference>
<evidence type="ECO:0000255" key="1">
    <source>
        <dbReference type="HAMAP-Rule" id="MF_00518"/>
    </source>
</evidence>
<organism>
    <name type="scientific">Acinetobacter baumannii (strain ATCC 17978 / DSM 105126 / CIP 53.77 / LMG 1025 / NCDC KC755 / 5377)</name>
    <dbReference type="NCBI Taxonomy" id="400667"/>
    <lineage>
        <taxon>Bacteria</taxon>
        <taxon>Pseudomonadati</taxon>
        <taxon>Pseudomonadota</taxon>
        <taxon>Gammaproteobacteria</taxon>
        <taxon>Moraxellales</taxon>
        <taxon>Moraxellaceae</taxon>
        <taxon>Acinetobacter</taxon>
        <taxon>Acinetobacter calcoaceticus/baumannii complex</taxon>
    </lineage>
</organism>
<sequence length="147" mass="16273">MRALIQRVLEAKVEVDGQTTGEIKKGLLVFLGIGRDDTLATGQKLIDKILKYRIFDDEQGKMGWNVSQANGGILLVSQFTLMAQTQKGLRPDFGPAMPPSDAKALYEQLVEYTRSQFENVQTGIFAADMKVHLINDGPVTFNLEVEA</sequence>
<proteinExistence type="inferred from homology"/>
<comment type="function">
    <text evidence="1">An aminoacyl-tRNA editing enzyme that deacylates mischarged D-aminoacyl-tRNAs. Also deacylates mischarged glycyl-tRNA(Ala), protecting cells against glycine mischarging by AlaRS. Acts via tRNA-based rather than protein-based catalysis; rejects L-amino acids rather than detecting D-amino acids in the active site. By recycling D-aminoacyl-tRNA to D-amino acids and free tRNA molecules, this enzyme counteracts the toxicity associated with the formation of D-aminoacyl-tRNA entities in vivo and helps enforce protein L-homochirality.</text>
</comment>
<comment type="catalytic activity">
    <reaction evidence="1">
        <text>glycyl-tRNA(Ala) + H2O = tRNA(Ala) + glycine + H(+)</text>
        <dbReference type="Rhea" id="RHEA:53744"/>
        <dbReference type="Rhea" id="RHEA-COMP:9657"/>
        <dbReference type="Rhea" id="RHEA-COMP:13640"/>
        <dbReference type="ChEBI" id="CHEBI:15377"/>
        <dbReference type="ChEBI" id="CHEBI:15378"/>
        <dbReference type="ChEBI" id="CHEBI:57305"/>
        <dbReference type="ChEBI" id="CHEBI:78442"/>
        <dbReference type="ChEBI" id="CHEBI:78522"/>
        <dbReference type="EC" id="3.1.1.96"/>
    </reaction>
</comment>
<comment type="catalytic activity">
    <reaction evidence="1">
        <text>a D-aminoacyl-tRNA + H2O = a tRNA + a D-alpha-amino acid + H(+)</text>
        <dbReference type="Rhea" id="RHEA:13953"/>
        <dbReference type="Rhea" id="RHEA-COMP:10123"/>
        <dbReference type="Rhea" id="RHEA-COMP:10124"/>
        <dbReference type="ChEBI" id="CHEBI:15377"/>
        <dbReference type="ChEBI" id="CHEBI:15378"/>
        <dbReference type="ChEBI" id="CHEBI:59871"/>
        <dbReference type="ChEBI" id="CHEBI:78442"/>
        <dbReference type="ChEBI" id="CHEBI:79333"/>
        <dbReference type="EC" id="3.1.1.96"/>
    </reaction>
</comment>
<comment type="subunit">
    <text evidence="1">Homodimer.</text>
</comment>
<comment type="subcellular location">
    <subcellularLocation>
        <location evidence="1">Cytoplasm</location>
    </subcellularLocation>
</comment>
<comment type="domain">
    <text evidence="1">A Gly-cisPro motif from one monomer fits into the active site of the other monomer to allow specific chiral rejection of L-amino acids.</text>
</comment>
<comment type="similarity">
    <text evidence="1">Belongs to the DTD family.</text>
</comment>
<keyword id="KW-0963">Cytoplasm</keyword>
<keyword id="KW-0378">Hydrolase</keyword>
<keyword id="KW-0694">RNA-binding</keyword>
<keyword id="KW-0820">tRNA-binding</keyword>
<reference key="1">
    <citation type="journal article" date="2007" name="Genes Dev.">
        <title>New insights into Acinetobacter baumannii pathogenesis revealed by high-density pyrosequencing and transposon mutagenesis.</title>
        <authorList>
            <person name="Smith M.G."/>
            <person name="Gianoulis T.A."/>
            <person name="Pukatzki S."/>
            <person name="Mekalanos J.J."/>
            <person name="Ornston L.N."/>
            <person name="Gerstein M."/>
            <person name="Snyder M."/>
        </authorList>
    </citation>
    <scope>NUCLEOTIDE SEQUENCE [LARGE SCALE GENOMIC DNA]</scope>
    <source>
        <strain>ATCC 17978 / DSM 105126 / CIP 53.77 / LMG 1025 / NCDC KC755 / 5377</strain>
    </source>
</reference>
<feature type="chain" id="PRO_1000127482" description="D-aminoacyl-tRNA deacylase">
    <location>
        <begin position="1"/>
        <end position="147"/>
    </location>
</feature>
<feature type="short sequence motif" description="Gly-cisPro motif, important for rejection of L-amino acids" evidence="1">
    <location>
        <begin position="137"/>
        <end position="138"/>
    </location>
</feature>
<accession>A3MA28</accession>
<gene>
    <name evidence="1" type="primary">dtd</name>
    <name type="ordered locus">A1S_3383</name>
</gene>